<feature type="chain" id="PRO_0000314993" description="Transcriptional activator VP30">
    <location>
        <begin position="1"/>
        <end position="281"/>
    </location>
</feature>
<feature type="zinc finger region" description="C3H1-type; atypical" evidence="1">
    <location>
        <begin position="78"/>
        <end position="96"/>
    </location>
</feature>
<feature type="region of interest" description="Disordered" evidence="3">
    <location>
        <begin position="1"/>
        <end position="77"/>
    </location>
</feature>
<feature type="region of interest" description="Disordered" evidence="3">
    <location>
        <begin position="120"/>
        <end position="144"/>
    </location>
</feature>
<feature type="compositionally biased region" description="Basic residues" evidence="3">
    <location>
        <begin position="1"/>
        <end position="12"/>
    </location>
</feature>
<feature type="compositionally biased region" description="Polar residues" evidence="3">
    <location>
        <begin position="24"/>
        <end position="33"/>
    </location>
</feature>
<feature type="compositionally biased region" description="Low complexity" evidence="3">
    <location>
        <begin position="39"/>
        <end position="53"/>
    </location>
</feature>
<sequence length="281" mass="31626">MQQPRGRSRTRNHQAIPSIYHETQLPSKPNYTNHHPRARSMSSTRSSTESSPTNHIPRARPPSTFNLSKPPPPPKDMCRNMKIGLPCTDLTCNRDHDLDNLTNRELLLLMARKMLPNTDKVFKSPQDCGSPSLSKGLSKDKQEQTKDVLTLENLGHILNYLHRSEIGKLDETSLRAALSLTCAGIRKTNRSLINTMTELHINHENLPQDQNGVIKQTYTGIHLDKGGQFEAALWQGWDKRSISLFVQAALYVMNNIPCESSISVQASYDHFILPQSQGKGQ</sequence>
<gene>
    <name type="primary">VP30</name>
</gene>
<evidence type="ECO:0000250" key="1"/>
<evidence type="ECO:0000250" key="2">
    <source>
        <dbReference type="UniProtKB" id="Q05323"/>
    </source>
</evidence>
<evidence type="ECO:0000256" key="3">
    <source>
        <dbReference type="SAM" id="MobiDB-lite"/>
    </source>
</evidence>
<evidence type="ECO:0000305" key="4"/>
<organism>
    <name type="scientific">Lake Victoria marburgvirus (strain Ozolin-75)</name>
    <name type="common">MARV</name>
    <name type="synonym">Marburg virus (strain South Africa/Ozolin/1975)</name>
    <dbReference type="NCBI Taxonomy" id="482820"/>
    <lineage>
        <taxon>Viruses</taxon>
        <taxon>Riboviria</taxon>
        <taxon>Orthornavirae</taxon>
        <taxon>Negarnaviricota</taxon>
        <taxon>Haploviricotina</taxon>
        <taxon>Monjiviricetes</taxon>
        <taxon>Mononegavirales</taxon>
        <taxon>Filoviridae</taxon>
        <taxon>Orthomarburgvirus</taxon>
        <taxon>Orthomarburgvirus marburgense</taxon>
    </lineage>
</organism>
<dbReference type="EMBL" id="AY358025">
    <property type="protein sequence ID" value="AAQ55259.1"/>
    <property type="molecule type" value="Genomic_RNA"/>
</dbReference>
<dbReference type="SMR" id="Q6UY65"/>
<dbReference type="Proteomes" id="UP000000838">
    <property type="component" value="Genome"/>
</dbReference>
<dbReference type="GO" id="GO:0030430">
    <property type="term" value="C:host cell cytoplasm"/>
    <property type="evidence" value="ECO:0007669"/>
    <property type="project" value="UniProtKB-SubCell"/>
</dbReference>
<dbReference type="GO" id="GO:0019013">
    <property type="term" value="C:viral nucleocapsid"/>
    <property type="evidence" value="ECO:0007669"/>
    <property type="project" value="UniProtKB-KW"/>
</dbReference>
<dbReference type="GO" id="GO:0003723">
    <property type="term" value="F:RNA binding"/>
    <property type="evidence" value="ECO:0007669"/>
    <property type="project" value="InterPro"/>
</dbReference>
<dbReference type="GO" id="GO:0008270">
    <property type="term" value="F:zinc ion binding"/>
    <property type="evidence" value="ECO:0007669"/>
    <property type="project" value="UniProtKB-KW"/>
</dbReference>
<dbReference type="FunFam" id="1.20.120.1160:FF:000001">
    <property type="entry name" value="Minor nucleoprotein VP30"/>
    <property type="match status" value="1"/>
</dbReference>
<dbReference type="Gene3D" id="1.20.120.1160">
    <property type="match status" value="1"/>
</dbReference>
<dbReference type="InterPro" id="IPR014459">
    <property type="entry name" value="VP30_FiloV"/>
</dbReference>
<dbReference type="Pfam" id="PF11507">
    <property type="entry name" value="Transcript_VP30"/>
    <property type="match status" value="1"/>
</dbReference>
<dbReference type="PIRSF" id="PIRSF011356">
    <property type="entry name" value="VP30_FiloV"/>
    <property type="match status" value="1"/>
</dbReference>
<accession>Q6UY65</accession>
<reference key="1">
    <citation type="submission" date="2003-08" db="EMBL/GenBank/DDBJ databases">
        <authorList>
            <person name="Bowen M.D."/>
            <person name="Thurman K."/>
            <person name="Minor E."/>
            <person name="Ibrahim M.S."/>
            <person name="Meyer R.F."/>
            <person name="Malfatti S.A."/>
            <person name="Do L.H."/>
            <person name="Smith K.L."/>
            <person name="McCready P.M."/>
            <person name="Chain P.S.G."/>
        </authorList>
    </citation>
    <scope>NUCLEOTIDE SEQUENCE [GENOMIC RNA]</scope>
</reference>
<keyword id="KW-1035">Host cytoplasm</keyword>
<keyword id="KW-0479">Metal-binding</keyword>
<keyword id="KW-0597">Phosphoprotein</keyword>
<keyword id="KW-0804">Transcription</keyword>
<keyword id="KW-0543">Viral nucleoprotein</keyword>
<keyword id="KW-0946">Virion</keyword>
<keyword id="KW-0862">Zinc</keyword>
<keyword id="KW-0863">Zinc-finger</keyword>
<proteinExistence type="inferred from homology"/>
<organismHost>
    <name type="scientific">Chlorocebus aethiops</name>
    <name type="common">Green monkey</name>
    <name type="synonym">Cercopithecus aethiops</name>
    <dbReference type="NCBI Taxonomy" id="9534"/>
</organismHost>
<organismHost>
    <name type="scientific">Homo sapiens</name>
    <name type="common">Human</name>
    <dbReference type="NCBI Taxonomy" id="9606"/>
</organismHost>
<organismHost>
    <name type="scientific">Rousettus aegyptiacus</name>
    <name type="common">Egyptian fruit bat</name>
    <name type="synonym">Pteropus aegyptiacus</name>
    <dbReference type="NCBI Taxonomy" id="9407"/>
</organismHost>
<protein>
    <recommendedName>
        <fullName evidence="2">Transcriptional activator VP30</fullName>
    </recommendedName>
    <alternativeName>
        <fullName>Minor nucleoprotein VP30</fullName>
    </alternativeName>
</protein>
<comment type="function">
    <text evidence="1">Acts as a transcription anti-termination factor immediately after transcription initiation, but does not affect transcription elongation. This function has been found to be dependent on the formation of an RNA secondary structure at the transcription start site of the first gene (By similarity).</text>
</comment>
<comment type="subunit">
    <text evidence="1">Homooligomer.</text>
</comment>
<comment type="subcellular location">
    <subcellularLocation>
        <location>Virion</location>
    </subcellularLocation>
    <subcellularLocation>
        <location evidence="1">Host cytoplasm</location>
    </subcellularLocation>
    <text>Tightly bound in the nucleocapsid.</text>
</comment>
<comment type="PTM">
    <text evidence="1">Phosphorylated by host. Phosphorylation negatively regulates the transcription activation (By similarity).</text>
</comment>
<comment type="similarity">
    <text evidence="4">Belongs to the filoviridae transcriptional activator VP30 family.</text>
</comment>
<name>VP30_MABVO</name>